<comment type="function">
    <text evidence="1">Catalyzes the ATP-dependent 2-thiolation of cytidine in position 32 of tRNA, to form 2-thiocytidine (s(2)C32). The sulfur atoms are provided by the cysteine/cysteine desulfurase (IscS) system.</text>
</comment>
<comment type="catalytic activity">
    <reaction evidence="1">
        <text>cytidine(32) in tRNA + S-sulfanyl-L-cysteinyl-[cysteine desulfurase] + AH2 + ATP = 2-thiocytidine(32) in tRNA + L-cysteinyl-[cysteine desulfurase] + A + AMP + diphosphate + H(+)</text>
        <dbReference type="Rhea" id="RHEA:57048"/>
        <dbReference type="Rhea" id="RHEA-COMP:10288"/>
        <dbReference type="Rhea" id="RHEA-COMP:12157"/>
        <dbReference type="Rhea" id="RHEA-COMP:12158"/>
        <dbReference type="Rhea" id="RHEA-COMP:14821"/>
        <dbReference type="ChEBI" id="CHEBI:13193"/>
        <dbReference type="ChEBI" id="CHEBI:15378"/>
        <dbReference type="ChEBI" id="CHEBI:17499"/>
        <dbReference type="ChEBI" id="CHEBI:29950"/>
        <dbReference type="ChEBI" id="CHEBI:30616"/>
        <dbReference type="ChEBI" id="CHEBI:33019"/>
        <dbReference type="ChEBI" id="CHEBI:61963"/>
        <dbReference type="ChEBI" id="CHEBI:82748"/>
        <dbReference type="ChEBI" id="CHEBI:141453"/>
        <dbReference type="ChEBI" id="CHEBI:456215"/>
    </reaction>
    <physiologicalReaction direction="left-to-right" evidence="1">
        <dbReference type="Rhea" id="RHEA:57049"/>
    </physiologicalReaction>
</comment>
<comment type="cofactor">
    <cofactor evidence="1">
        <name>Mg(2+)</name>
        <dbReference type="ChEBI" id="CHEBI:18420"/>
    </cofactor>
</comment>
<comment type="cofactor">
    <cofactor evidence="1">
        <name>[4Fe-4S] cluster</name>
        <dbReference type="ChEBI" id="CHEBI:49883"/>
    </cofactor>
    <text evidence="1">Binds 1 [4Fe-4S] cluster per subunit. The cluster is chelated by three Cys residues, the fourth Fe has a free coordination site that may bind a sulfur atom transferred from the persulfide of IscS.</text>
</comment>
<comment type="pathway">
    <text evidence="1">tRNA modification.</text>
</comment>
<comment type="subunit">
    <text evidence="1">Homodimer.</text>
</comment>
<comment type="subcellular location">
    <subcellularLocation>
        <location evidence="1">Cytoplasm</location>
    </subcellularLocation>
</comment>
<comment type="miscellaneous">
    <text evidence="1">The thiolation reaction likely consists of two steps: a first activation step by ATP to form an adenylated intermediate of the target base of tRNA, and a second nucleophilic substitution step of the sulfur (S) atom supplied by the hydrosulfide attached to the Fe-S cluster.</text>
</comment>
<comment type="similarity">
    <text evidence="1">Belongs to the TtcA family.</text>
</comment>
<proteinExistence type="inferred from homology"/>
<dbReference type="EC" id="2.8.1.-" evidence="1"/>
<dbReference type="EMBL" id="CP000948">
    <property type="protein sequence ID" value="ACB02565.1"/>
    <property type="molecule type" value="Genomic_DNA"/>
</dbReference>
<dbReference type="RefSeq" id="WP_001157406.1">
    <property type="nucleotide sequence ID" value="NC_010473.1"/>
</dbReference>
<dbReference type="SMR" id="B1XCH3"/>
<dbReference type="KEGG" id="ecd:ECDH10B_1465"/>
<dbReference type="HOGENOM" id="CLU_026481_0_0_6"/>
<dbReference type="GO" id="GO:0005737">
    <property type="term" value="C:cytoplasm"/>
    <property type="evidence" value="ECO:0007669"/>
    <property type="project" value="UniProtKB-SubCell"/>
</dbReference>
<dbReference type="GO" id="GO:0051539">
    <property type="term" value="F:4 iron, 4 sulfur cluster binding"/>
    <property type="evidence" value="ECO:0007669"/>
    <property type="project" value="UniProtKB-UniRule"/>
</dbReference>
<dbReference type="GO" id="GO:0005524">
    <property type="term" value="F:ATP binding"/>
    <property type="evidence" value="ECO:0007669"/>
    <property type="project" value="UniProtKB-UniRule"/>
</dbReference>
<dbReference type="GO" id="GO:0000287">
    <property type="term" value="F:magnesium ion binding"/>
    <property type="evidence" value="ECO:0007669"/>
    <property type="project" value="UniProtKB-UniRule"/>
</dbReference>
<dbReference type="GO" id="GO:0016783">
    <property type="term" value="F:sulfurtransferase activity"/>
    <property type="evidence" value="ECO:0007669"/>
    <property type="project" value="UniProtKB-UniRule"/>
</dbReference>
<dbReference type="GO" id="GO:0000049">
    <property type="term" value="F:tRNA binding"/>
    <property type="evidence" value="ECO:0007669"/>
    <property type="project" value="UniProtKB-KW"/>
</dbReference>
<dbReference type="GO" id="GO:0034227">
    <property type="term" value="P:tRNA thio-modification"/>
    <property type="evidence" value="ECO:0007669"/>
    <property type="project" value="UniProtKB-UniRule"/>
</dbReference>
<dbReference type="CDD" id="cd24138">
    <property type="entry name" value="TtcA-like"/>
    <property type="match status" value="1"/>
</dbReference>
<dbReference type="FunFam" id="3.40.50.620:FF:000046">
    <property type="entry name" value="tRNA-cytidine(32) 2-sulfurtransferase"/>
    <property type="match status" value="1"/>
</dbReference>
<dbReference type="Gene3D" id="3.40.50.620">
    <property type="entry name" value="HUPs"/>
    <property type="match status" value="1"/>
</dbReference>
<dbReference type="HAMAP" id="MF_01850">
    <property type="entry name" value="TtcA"/>
    <property type="match status" value="1"/>
</dbReference>
<dbReference type="InterPro" id="IPR014729">
    <property type="entry name" value="Rossmann-like_a/b/a_fold"/>
</dbReference>
<dbReference type="InterPro" id="IPR011063">
    <property type="entry name" value="TilS/TtcA_N"/>
</dbReference>
<dbReference type="InterPro" id="IPR012089">
    <property type="entry name" value="tRNA_Cyd_32_2_STrfase"/>
</dbReference>
<dbReference type="InterPro" id="IPR035107">
    <property type="entry name" value="tRNA_thiolation_TtcA_Ctu1"/>
</dbReference>
<dbReference type="NCBIfam" id="NF007972">
    <property type="entry name" value="PRK10696.1"/>
    <property type="match status" value="1"/>
</dbReference>
<dbReference type="PANTHER" id="PTHR43686:SF1">
    <property type="entry name" value="AMINOTRAN_5 DOMAIN-CONTAINING PROTEIN"/>
    <property type="match status" value="1"/>
</dbReference>
<dbReference type="PANTHER" id="PTHR43686">
    <property type="entry name" value="SULFURTRANSFERASE-RELATED"/>
    <property type="match status" value="1"/>
</dbReference>
<dbReference type="Pfam" id="PF01171">
    <property type="entry name" value="ATP_bind_3"/>
    <property type="match status" value="1"/>
</dbReference>
<dbReference type="PIRSF" id="PIRSF004976">
    <property type="entry name" value="ATPase_YdaO"/>
    <property type="match status" value="1"/>
</dbReference>
<dbReference type="SUPFAM" id="SSF52402">
    <property type="entry name" value="Adenine nucleotide alpha hydrolases-like"/>
    <property type="match status" value="1"/>
</dbReference>
<accession>B1XCH3</accession>
<organism>
    <name type="scientific">Escherichia coli (strain K12 / DH10B)</name>
    <dbReference type="NCBI Taxonomy" id="316385"/>
    <lineage>
        <taxon>Bacteria</taxon>
        <taxon>Pseudomonadati</taxon>
        <taxon>Pseudomonadota</taxon>
        <taxon>Gammaproteobacteria</taxon>
        <taxon>Enterobacterales</taxon>
        <taxon>Enterobacteriaceae</taxon>
        <taxon>Escherichia</taxon>
    </lineage>
</organism>
<feature type="chain" id="PRO_0000348718" description="tRNA-cytidine(32) 2-sulfurtransferase">
    <location>
        <begin position="1"/>
        <end position="311"/>
    </location>
</feature>
<feature type="short sequence motif" description="PP-loop motif" evidence="1">
    <location>
        <begin position="47"/>
        <end position="52"/>
    </location>
</feature>
<feature type="binding site" evidence="1">
    <location>
        <position position="122"/>
    </location>
    <ligand>
        <name>[4Fe-4S] cluster</name>
        <dbReference type="ChEBI" id="CHEBI:49883"/>
    </ligand>
</feature>
<feature type="binding site" evidence="1">
    <location>
        <position position="125"/>
    </location>
    <ligand>
        <name>[4Fe-4S] cluster</name>
        <dbReference type="ChEBI" id="CHEBI:49883"/>
    </ligand>
</feature>
<feature type="binding site" evidence="1">
    <location>
        <position position="213"/>
    </location>
    <ligand>
        <name>[4Fe-4S] cluster</name>
        <dbReference type="ChEBI" id="CHEBI:49883"/>
    </ligand>
</feature>
<keyword id="KW-0004">4Fe-4S</keyword>
<keyword id="KW-0067">ATP-binding</keyword>
<keyword id="KW-0963">Cytoplasm</keyword>
<keyword id="KW-0408">Iron</keyword>
<keyword id="KW-0411">Iron-sulfur</keyword>
<keyword id="KW-0460">Magnesium</keyword>
<keyword id="KW-0479">Metal-binding</keyword>
<keyword id="KW-0547">Nucleotide-binding</keyword>
<keyword id="KW-0694">RNA-binding</keyword>
<keyword id="KW-0808">Transferase</keyword>
<keyword id="KW-0819">tRNA processing</keyword>
<keyword id="KW-0820">tRNA-binding</keyword>
<reference key="1">
    <citation type="journal article" date="2008" name="J. Bacteriol.">
        <title>The complete genome sequence of Escherichia coli DH10B: insights into the biology of a laboratory workhorse.</title>
        <authorList>
            <person name="Durfee T."/>
            <person name="Nelson R."/>
            <person name="Baldwin S."/>
            <person name="Plunkett G. III"/>
            <person name="Burland V."/>
            <person name="Mau B."/>
            <person name="Petrosino J.F."/>
            <person name="Qin X."/>
            <person name="Muzny D.M."/>
            <person name="Ayele M."/>
            <person name="Gibbs R.A."/>
            <person name="Csorgo B."/>
            <person name="Posfai G."/>
            <person name="Weinstock G.M."/>
            <person name="Blattner F.R."/>
        </authorList>
    </citation>
    <scope>NUCLEOTIDE SEQUENCE [LARGE SCALE GENOMIC DNA]</scope>
    <source>
        <strain>K12 / DH10B</strain>
    </source>
</reference>
<gene>
    <name evidence="1" type="primary">ttcA</name>
    <name type="ordered locus">ECDH10B_1465</name>
</gene>
<sequence length="311" mass="35561">MQENQQITKKEQYNLNKLQKRLRRNVGEAIADFNMIEEGDRIMVCLSGGKDSYTMLEILRNLQQSAPINFSLVAVNLDQKQPGFPEHVLPEYLEKLGVEYKIVEENTYGIVKEKIPEGKTTCSLCSRLRRGILYRTATELGATKIALGHHRDDILQTLFLNMFYGGKMKGMPPKLMSDDGKHIVIRPLAYCREKDIQRFADAKAFPIIPCNLCGSQPNLQRQVIADMLRDWDKRYPGRIETMFSAMQNVVPSHLCDTNLFDFKGITHGSEVVNGGDLAFDREEIPLQPACWQPEEDENQLDELRLNVVEVK</sequence>
<protein>
    <recommendedName>
        <fullName evidence="1">tRNA-cytidine(32) 2-sulfurtransferase</fullName>
        <ecNumber evidence="1">2.8.1.-</ecNumber>
    </recommendedName>
    <alternativeName>
        <fullName evidence="1">Two-thiocytidine biosynthesis protein A</fullName>
    </alternativeName>
    <alternativeName>
        <fullName evidence="1">tRNA 2-thiocytidine biosynthesis protein TtcA</fullName>
    </alternativeName>
</protein>
<name>TTCA_ECODH</name>
<evidence type="ECO:0000255" key="1">
    <source>
        <dbReference type="HAMAP-Rule" id="MF_01850"/>
    </source>
</evidence>